<accession>P03118</accession>
<protein>
    <recommendedName>
        <fullName evidence="1">Regulatory protein E2</fullName>
    </recommendedName>
</protein>
<gene>
    <name evidence="1" type="primary">E2</name>
</gene>
<proteinExistence type="inferred from homology"/>
<sequence length="401" mass="45481">MENLSSRLDLLQEQLMNLYEQDSKLIEDQIKQWNLIRQEQVLFHFARKNGVMRIGLQAVPSLASSQEKAKTAIEMVLHLESLKDSPYGTEDWSLQDTSRELFLAPPAGTFKKSGSTLEVTYDNNPDNQTRHTIWNHVYYQNGDDVWRKVSSGVDAVGVYYLEHDGYKNYYVLFAEEASKYSTTGQYAVNYRGKRFTNVMSSTSSPRAAGAPAVHSDYPTLSESDTAQQSTSIDYTELPGQGETSQVRQRQQKTPVRRRPYGRRRSRSPRGGGRREGESTPSRTPGSVPSARDVGSIHTTPQKGHSSRLRRLLQEAWDPPVVCVKGGANQLKCLRYRLKASTQVDFDSISTTWHWTDRKNTERIGSARMLVKFIDEAQREKFLERVALPRSVSVFLGQFNGS</sequence>
<keyword id="KW-0010">Activator</keyword>
<keyword id="KW-0235">DNA replication</keyword>
<keyword id="KW-0238">DNA-binding</keyword>
<keyword id="KW-0244">Early protein</keyword>
<keyword id="KW-1048">Host nucleus</keyword>
<keyword id="KW-1017">Isopeptide bond</keyword>
<keyword id="KW-0597">Phosphoprotein</keyword>
<keyword id="KW-1185">Reference proteome</keyword>
<keyword id="KW-0678">Repressor</keyword>
<keyword id="KW-0804">Transcription</keyword>
<keyword id="KW-0805">Transcription regulation</keyword>
<keyword id="KW-0832">Ubl conjugation</keyword>
<name>VE2_HPV1</name>
<organismHost>
    <name type="scientific">Homo sapiens</name>
    <name type="common">Human</name>
    <dbReference type="NCBI Taxonomy" id="9606"/>
</organismHost>
<dbReference type="EMBL" id="V01116">
    <property type="status" value="NOT_ANNOTATED_CDS"/>
    <property type="molecule type" value="Genomic_DNA"/>
</dbReference>
<dbReference type="PIR" id="A03665">
    <property type="entry name" value="W2WLE"/>
</dbReference>
<dbReference type="SMR" id="P03118"/>
<dbReference type="IntAct" id="P03118">
    <property type="interactions" value="74"/>
</dbReference>
<dbReference type="MINT" id="P03118"/>
<dbReference type="BindingDB" id="P03118"/>
<dbReference type="ChEMBL" id="CHEMBL5822"/>
<dbReference type="DrugCentral" id="P03118"/>
<dbReference type="Proteomes" id="UP000006372">
    <property type="component" value="Segment"/>
</dbReference>
<dbReference type="GO" id="GO:0042025">
    <property type="term" value="C:host cell nucleus"/>
    <property type="evidence" value="ECO:0007669"/>
    <property type="project" value="UniProtKB-SubCell"/>
</dbReference>
<dbReference type="GO" id="GO:0003677">
    <property type="term" value="F:DNA binding"/>
    <property type="evidence" value="ECO:0007669"/>
    <property type="project" value="UniProtKB-UniRule"/>
</dbReference>
<dbReference type="GO" id="GO:0003700">
    <property type="term" value="F:DNA-binding transcription factor activity"/>
    <property type="evidence" value="ECO:0007669"/>
    <property type="project" value="UniProtKB-UniRule"/>
</dbReference>
<dbReference type="GO" id="GO:0000166">
    <property type="term" value="F:nucleotide binding"/>
    <property type="evidence" value="ECO:0007669"/>
    <property type="project" value="UniProtKB-UniRule"/>
</dbReference>
<dbReference type="GO" id="GO:0006260">
    <property type="term" value="P:DNA replication"/>
    <property type="evidence" value="ECO:0007669"/>
    <property type="project" value="UniProtKB-KW"/>
</dbReference>
<dbReference type="GO" id="GO:0006351">
    <property type="term" value="P:DNA-templated transcription"/>
    <property type="evidence" value="ECO:0007669"/>
    <property type="project" value="UniProtKB-UniRule"/>
</dbReference>
<dbReference type="GO" id="GO:0006275">
    <property type="term" value="P:regulation of DNA replication"/>
    <property type="evidence" value="ECO:0007669"/>
    <property type="project" value="UniProtKB-UniRule"/>
</dbReference>
<dbReference type="GO" id="GO:0039693">
    <property type="term" value="P:viral DNA genome replication"/>
    <property type="evidence" value="ECO:0007669"/>
    <property type="project" value="UniProtKB-UniRule"/>
</dbReference>
<dbReference type="Gene3D" id="3.30.70.330">
    <property type="match status" value="1"/>
</dbReference>
<dbReference type="Gene3D" id="1.10.287.30">
    <property type="entry name" value="E2 (early) protein, N terminal domain, subdomain 1"/>
    <property type="match status" value="1"/>
</dbReference>
<dbReference type="Gene3D" id="2.170.200.10">
    <property type="entry name" value="Papillomavirus E2 early protein domain"/>
    <property type="match status" value="1"/>
</dbReference>
<dbReference type="HAMAP" id="MF_04001">
    <property type="entry name" value="PPV_E2"/>
    <property type="match status" value="1"/>
</dbReference>
<dbReference type="InterPro" id="IPR035975">
    <property type="entry name" value="E2/EBNA1_C_sf"/>
</dbReference>
<dbReference type="InterPro" id="IPR012677">
    <property type="entry name" value="Nucleotide-bd_a/b_plait_sf"/>
</dbReference>
<dbReference type="InterPro" id="IPR000427">
    <property type="entry name" value="Papillomavirus_E2_C"/>
</dbReference>
<dbReference type="InterPro" id="IPR001866">
    <property type="entry name" value="PPV_E2_N"/>
</dbReference>
<dbReference type="InterPro" id="IPR033668">
    <property type="entry name" value="Reg_prot_E2"/>
</dbReference>
<dbReference type="InterPro" id="IPR036050">
    <property type="entry name" value="Regulatory_protein_E2_N"/>
</dbReference>
<dbReference type="InterPro" id="IPR042503">
    <property type="entry name" value="Regulatory_protein_E2_N_1"/>
</dbReference>
<dbReference type="InterPro" id="IPR042504">
    <property type="entry name" value="Regulatory_protein_E2_N_2"/>
</dbReference>
<dbReference type="Pfam" id="PF00511">
    <property type="entry name" value="PPV_E2_C"/>
    <property type="match status" value="1"/>
</dbReference>
<dbReference type="Pfam" id="PF00508">
    <property type="entry name" value="PPV_E2_N"/>
    <property type="match status" value="1"/>
</dbReference>
<dbReference type="SUPFAM" id="SSF51332">
    <property type="entry name" value="E2 regulatory, transactivation domain"/>
    <property type="match status" value="1"/>
</dbReference>
<dbReference type="SUPFAM" id="SSF54957">
    <property type="entry name" value="Viral DNA-binding domain"/>
    <property type="match status" value="1"/>
</dbReference>
<feature type="chain" id="PRO_0000133178" description="Regulatory protein E2">
    <location>
        <begin position="1"/>
        <end position="401"/>
    </location>
</feature>
<feature type="region of interest" description="Transactivation domain" evidence="1">
    <location>
        <begin position="1"/>
        <end position="202"/>
    </location>
</feature>
<feature type="region of interest" description="Disordered" evidence="2">
    <location>
        <begin position="199"/>
        <end position="308"/>
    </location>
</feature>
<feature type="region of interest" description="DNA-binding domain" evidence="1">
    <location>
        <begin position="317"/>
        <end position="401"/>
    </location>
</feature>
<feature type="compositionally biased region" description="Polar residues" evidence="2">
    <location>
        <begin position="218"/>
        <end position="233"/>
    </location>
</feature>
<feature type="compositionally biased region" description="Polar residues" evidence="2">
    <location>
        <begin position="241"/>
        <end position="253"/>
    </location>
</feature>
<feature type="compositionally biased region" description="Basic residues" evidence="2">
    <location>
        <begin position="254"/>
        <end position="267"/>
    </location>
</feature>
<feature type="cross-link" description="Glycyl lysine isopeptide (Lys-Gly) (interchain with G-Cter in SUMO)" evidence="1">
    <location>
        <position position="324"/>
    </location>
</feature>
<reference key="1">
    <citation type="journal article" date="1982" name="EMBO J.">
        <title>Human papillomavirus 1a complete DNA sequence: a novel type of genome organization among papovaviridae.</title>
        <authorList>
            <person name="Danos O."/>
            <person name="Katinka M."/>
            <person name="Yaniv M."/>
        </authorList>
    </citation>
    <scope>NUCLEOTIDE SEQUENCE [GENOMIC DNA]</scope>
</reference>
<reference key="2">
    <citation type="submission" date="1985-01" db="EMBL/GenBank/DDBJ databases">
        <authorList>
            <person name="Danos O."/>
        </authorList>
    </citation>
    <scope>SEQUENCE REVISION</scope>
</reference>
<organism>
    <name type="scientific">Human papillomavirus type 1</name>
    <name type="common">Human papillomavirus type 1a</name>
    <dbReference type="NCBI Taxonomy" id="10583"/>
    <lineage>
        <taxon>Viruses</taxon>
        <taxon>Monodnaviria</taxon>
        <taxon>Shotokuvirae</taxon>
        <taxon>Cossaviricota</taxon>
        <taxon>Papovaviricetes</taxon>
        <taxon>Zurhausenvirales</taxon>
        <taxon>Papillomaviridae</taxon>
        <taxon>Firstpapillomavirinae</taxon>
        <taxon>Mupapillomavirus</taxon>
        <taxon>Mupapillomavirus 1</taxon>
    </lineage>
</organism>
<evidence type="ECO:0000255" key="1">
    <source>
        <dbReference type="HAMAP-Rule" id="MF_04001"/>
    </source>
</evidence>
<evidence type="ECO:0000256" key="2">
    <source>
        <dbReference type="SAM" id="MobiDB-lite"/>
    </source>
</evidence>
<comment type="function">
    <text evidence="1">Plays a role in the initiation of viral DNA replication. A dimer of E2 interacts with a dimer of E1 in order to improve specificity of E1 DNA binding activity. Once the complex recognizes and binds DNA at specific sites, the E2 dimer is removed from DNA. E2 also regulates viral transcription through binding to the E2RE response element (5'-ACCNNNNNNGGT-3') present in multiple copies in the regulatory regions of the viral genome. Activates or represses transcription depending on E2RE's position with regards to proximal promoter elements including the TATA-box. Repression occurs by sterically hindering the assembly of the transcription initiation complex.</text>
</comment>
<comment type="subunit">
    <text evidence="1">Binds DNA as homodimer. Interacts with protein E1; this interaction greatly increases E1 DNA-binding activity. Interacts with protein L1; this interaction enhances E2-dependent replication and transcription activation. Interacts with protein L2; this interaction inhibits E2 transcriptional activity but not DNA replication function E2. Interacts with protein E7; this interaction inhibits E7 oncogenic activity. Interacts with host TAF1; this interaction modulates E2-dependent transcriptional regulation. Interacts with host BRD4; this interaction mediates E2 transcriptional activation function. Additionally, the interaction with host BRD4 on mitotic chromosomes mediates tethering of the viral genome. Interacts with host TOPBP1; this interaction is required for optimal viral DNA replication.</text>
</comment>
<comment type="subcellular location">
    <subcellularLocation>
        <location evidence="1">Host nucleus</location>
    </subcellularLocation>
</comment>
<comment type="PTM">
    <text evidence="1">Phosphorylated.</text>
</comment>
<comment type="PTM">
    <text evidence="1">Sumoylation plays a regulatory role in E2 transcriptional activity.</text>
</comment>
<comment type="similarity">
    <text evidence="1">Belongs to the papillomaviridae E2 protein family.</text>
</comment>